<dbReference type="EC" id="2.7.7.-"/>
<dbReference type="EC" id="3.1.21.-"/>
<dbReference type="EC" id="3.6.1.-"/>
<dbReference type="EMBL" id="AF071879">
    <property type="protein sequence ID" value="AAC34819.1"/>
    <property type="molecule type" value="Genomic_DNA"/>
</dbReference>
<dbReference type="EMBL" id="AY193712">
    <property type="protein sequence ID" value="AAO39666.1"/>
    <property type="molecule type" value="Genomic_DNA"/>
</dbReference>
<dbReference type="EMBL" id="AY184287">
    <property type="protein sequence ID" value="AAN77859.1"/>
    <property type="molecule type" value="Genomic_DNA"/>
</dbReference>
<dbReference type="EMBL" id="AY184287">
    <property type="protein sequence ID" value="AAN77860.1"/>
    <property type="molecule type" value="Genomic_DNA"/>
</dbReference>
<dbReference type="EMBL" id="AY184287">
    <property type="protein sequence ID" value="AAN77861.1"/>
    <property type="molecule type" value="Genomic_DNA"/>
</dbReference>
<dbReference type="EMBL" id="AY184287">
    <property type="protein sequence ID" value="AAN77862.1"/>
    <property type="molecule type" value="Genomic_DNA"/>
</dbReference>
<dbReference type="EMBL" id="AY184287">
    <property type="protein sequence ID" value="AAN77863.1"/>
    <property type="molecule type" value="Genomic_DNA"/>
</dbReference>
<dbReference type="EMBL" id="AY660574">
    <property type="protein sequence ID" value="AAT72755.1"/>
    <property type="molecule type" value="Genomic_DNA"/>
</dbReference>
<dbReference type="SMR" id="Q805H4"/>
<dbReference type="KEGG" id="vg:7693233"/>
<dbReference type="OrthoDB" id="9195at10239"/>
<dbReference type="Proteomes" id="UP000007023">
    <property type="component" value="Genome"/>
</dbReference>
<dbReference type="Proteomes" id="UP000115772">
    <property type="component" value="Segment"/>
</dbReference>
<dbReference type="Proteomes" id="UP000136520">
    <property type="component" value="Segment"/>
</dbReference>
<dbReference type="Proteomes" id="UP000180335">
    <property type="component" value="Genome"/>
</dbReference>
<dbReference type="GO" id="GO:0042025">
    <property type="term" value="C:host cell nucleus"/>
    <property type="evidence" value="ECO:0007669"/>
    <property type="project" value="UniProtKB-SubCell"/>
</dbReference>
<dbReference type="GO" id="GO:0005524">
    <property type="term" value="F:ATP binding"/>
    <property type="evidence" value="ECO:0007669"/>
    <property type="project" value="UniProtKB-KW"/>
</dbReference>
<dbReference type="GO" id="GO:0016887">
    <property type="term" value="F:ATP hydrolysis activity"/>
    <property type="evidence" value="ECO:0007669"/>
    <property type="project" value="RHEA"/>
</dbReference>
<dbReference type="GO" id="GO:0003677">
    <property type="term" value="F:DNA binding"/>
    <property type="evidence" value="ECO:0007669"/>
    <property type="project" value="UniProtKB-KW"/>
</dbReference>
<dbReference type="GO" id="GO:0004519">
    <property type="term" value="F:endonuclease activity"/>
    <property type="evidence" value="ECO:0007669"/>
    <property type="project" value="UniProtKB-KW"/>
</dbReference>
<dbReference type="GO" id="GO:0046872">
    <property type="term" value="F:metal ion binding"/>
    <property type="evidence" value="ECO:0007669"/>
    <property type="project" value="UniProtKB-KW"/>
</dbReference>
<dbReference type="GO" id="GO:0016779">
    <property type="term" value="F:nucleotidyltransferase activity"/>
    <property type="evidence" value="ECO:0007669"/>
    <property type="project" value="UniProtKB-KW"/>
</dbReference>
<dbReference type="GO" id="GO:0003723">
    <property type="term" value="F:RNA binding"/>
    <property type="evidence" value="ECO:0007669"/>
    <property type="project" value="InterPro"/>
</dbReference>
<dbReference type="GO" id="GO:0003724">
    <property type="term" value="F:RNA helicase activity"/>
    <property type="evidence" value="ECO:0007669"/>
    <property type="project" value="InterPro"/>
</dbReference>
<dbReference type="GO" id="GO:0006260">
    <property type="term" value="P:DNA replication"/>
    <property type="evidence" value="ECO:0007669"/>
    <property type="project" value="UniProtKB-KW"/>
</dbReference>
<dbReference type="GO" id="GO:0039684">
    <property type="term" value="P:rolling circle single-stranded viral DNA replication"/>
    <property type="evidence" value="ECO:0000314"/>
    <property type="project" value="UniProtKB"/>
</dbReference>
<dbReference type="FunFam" id="3.40.50.300:FF:003663">
    <property type="entry name" value="Replication-associated protein"/>
    <property type="match status" value="1"/>
</dbReference>
<dbReference type="Gene3D" id="3.40.1310.20">
    <property type="match status" value="1"/>
</dbReference>
<dbReference type="Gene3D" id="3.40.50.300">
    <property type="entry name" value="P-loop containing nucleotide triphosphate hydrolases"/>
    <property type="match status" value="1"/>
</dbReference>
<dbReference type="InterPro" id="IPR049912">
    <property type="entry name" value="CRESS_DNA_REP"/>
</dbReference>
<dbReference type="InterPro" id="IPR000605">
    <property type="entry name" value="Helicase_SF3_ssDNA/RNA_vir"/>
</dbReference>
<dbReference type="InterPro" id="IPR027417">
    <property type="entry name" value="P-loop_NTPase"/>
</dbReference>
<dbReference type="Pfam" id="PF00910">
    <property type="entry name" value="RNA_helicase"/>
    <property type="match status" value="1"/>
</dbReference>
<dbReference type="Pfam" id="PF02407">
    <property type="entry name" value="Viral_Rep"/>
    <property type="match status" value="1"/>
</dbReference>
<dbReference type="SUPFAM" id="SSF52540">
    <property type="entry name" value="P-loop containing nucleoside triphosphate hydrolases"/>
    <property type="match status" value="1"/>
</dbReference>
<dbReference type="PROSITE" id="PS52020">
    <property type="entry name" value="CRESS_DNA_REP"/>
    <property type="match status" value="1"/>
</dbReference>
<evidence type="ECO:0000250" key="1"/>
<evidence type="ECO:0000250" key="2">
    <source>
        <dbReference type="UniProtKB" id="P27260"/>
    </source>
</evidence>
<evidence type="ECO:0000250" key="3">
    <source>
        <dbReference type="UniProtKB" id="Q8BB16"/>
    </source>
</evidence>
<evidence type="ECO:0000255" key="4"/>
<evidence type="ECO:0000255" key="5">
    <source>
        <dbReference type="PROSITE-ProRule" id="PRU01364"/>
    </source>
</evidence>
<evidence type="ECO:0000269" key="6">
    <source>
    </source>
</evidence>
<evidence type="ECO:0000303" key="7">
    <source>
    </source>
</evidence>
<evidence type="ECO:0000305" key="8"/>
<gene>
    <name type="primary">Rep</name>
    <name type="ORF">ORF1</name>
</gene>
<feature type="chain" id="PRO_0000133088" description="Replication-associated protein">
    <location>
        <begin position="1"/>
        <end position="312"/>
    </location>
</feature>
<feature type="domain" description="CRESS-DNA virus Rep endonuclease" evidence="5">
    <location>
        <begin position="8"/>
        <end position="107"/>
    </location>
</feature>
<feature type="short sequence motif" description="Nuclear localization signal" evidence="3">
    <location>
        <begin position="4"/>
        <end position="15"/>
    </location>
</feature>
<feature type="short sequence motif" description="RCR-1" evidence="5">
    <location>
        <begin position="15"/>
        <end position="18"/>
    </location>
</feature>
<feature type="short sequence motif" description="RCR-2" evidence="5">
    <location>
        <begin position="54"/>
        <end position="56"/>
    </location>
</feature>
<feature type="short sequence motif" description="RCR-3" evidence="5">
    <location>
        <begin position="93"/>
        <end position="96"/>
    </location>
</feature>
<feature type="active site" description="For DNA cleavage activity" evidence="5">
    <location>
        <position position="93"/>
    </location>
</feature>
<feature type="binding site" evidence="4">
    <location>
        <position position="45"/>
    </location>
    <ligand>
        <name>a divalent metal cation</name>
        <dbReference type="ChEBI" id="CHEBI:60240"/>
    </ligand>
</feature>
<feature type="binding site" evidence="4">
    <location>
        <position position="54"/>
    </location>
    <ligand>
        <name>a divalent metal cation</name>
        <dbReference type="ChEBI" id="CHEBI:60240"/>
    </ligand>
</feature>
<feature type="binding site" evidence="4">
    <location>
        <position position="97"/>
    </location>
    <ligand>
        <name>a divalent metal cation</name>
        <dbReference type="ChEBI" id="CHEBI:60240"/>
    </ligand>
</feature>
<feature type="binding site" evidence="2">
    <location>
        <begin position="171"/>
        <end position="178"/>
    </location>
    <ligand>
        <name>ATP</name>
        <dbReference type="ChEBI" id="CHEBI:30616"/>
    </ligand>
</feature>
<feature type="splice variant" id="VSP_015878" description="In isoform Rep3b." evidence="8">
    <location>
        <begin position="13"/>
        <end position="251"/>
    </location>
</feature>
<feature type="splice variant" id="VSP_015879" description="In isoform Rep3c-4a." evidence="8">
    <original>RWVFTLNNPSEEEKNKIRELPISLFDYFVCGEEGLEEGRTPHLQGFANFAKKQTFNKVKWYFGARCHIEKAKGTDQQNKEYCSKEGHILIECGAPRNQGKRSDLSTAVSTLLETGSLVTVAEQFPVTYVRNFRGLAELLKVSGKMQQRDWKTAVHVIVGPPGCGKSQWARNFAEPSDTYWKPSRNKWWDGYHGEEVVVLDDFYGWLPWDDLLRLCDRYPLTVETKGGTVPFLARS</original>
    <variation>SGILVPAATSRKRKEPTSRIKNTAVKKATYLSSVELRGTRGSAATCLLL</variation>
    <location>
        <begin position="13"/>
        <end position="247"/>
    </location>
</feature>
<feature type="splice variant" id="VSP_015877" description="In isoform Rep3a." evidence="8">
    <location>
        <begin position="13"/>
        <end position="246"/>
    </location>
</feature>
<feature type="splice variant" id="VSP_015880" description="In isoform Rep'." evidence="8">
    <original>VSTLLETGSLVTVAEQFPVTYVRNFRGLAELLKVSGKMQQRDWKTAVHV</original>
    <variation>YFDYQQSGPPGMVLLNCCPSCRSSLSEDYYFAILEDCWRTIHGGTRRPI</variation>
    <location>
        <begin position="120"/>
        <end position="168"/>
    </location>
</feature>
<feature type="splice variant" id="VSP_015881" description="In isoform Rep'." evidence="8">
    <location>
        <begin position="169"/>
        <end position="312"/>
    </location>
</feature>
<feature type="sequence variant" description="In strain: Isolate IBRS-2.">
    <original>Q</original>
    <variation>R</variation>
    <location>
        <position position="179"/>
    </location>
</feature>
<feature type="sequence conflict" description="In Ref. 1; AAC34819." evidence="8" ref="1">
    <original>A</original>
    <variation>T</variation>
    <location>
        <position position="185"/>
    </location>
</feature>
<comment type="function">
    <text evidence="6">Essential for the replication of viral ssDNA. The closed circular ssDNA genome is first converted to a superhelical dsDNA. Rep and/or Rep' binds a specific hairpin at the genome origin of replication. Introduces an endonucleolytic nick within the conserved sequence 5'-AGTATTAC-3' in the intergenic region of the genome, thereby initiating the rolling circle replication (RCR). Following cleavage, binds covalently to the 5'-phosphate of DNA as a tyrosyl ester. The cleavage gives rise to a free 3'-OH that serves as a primer for the cellular DNA polymerase. The polymerase synthesizes the (+) strand DNA by rolling circle mechanism. After one round of replication, a Rep-catalyzed nucleotidyl transfer reaction releases a circular single-stranded virus genome, thereby terminating the replication. Displays origin-specific DNA cleavage, and nucleotidyl transferase.</text>
</comment>
<comment type="catalytic activity">
    <reaction>
        <text>ATP + H2O = ADP + phosphate + H(+)</text>
        <dbReference type="Rhea" id="RHEA:13065"/>
        <dbReference type="ChEBI" id="CHEBI:15377"/>
        <dbReference type="ChEBI" id="CHEBI:15378"/>
        <dbReference type="ChEBI" id="CHEBI:30616"/>
        <dbReference type="ChEBI" id="CHEBI:43474"/>
        <dbReference type="ChEBI" id="CHEBI:456216"/>
    </reaction>
</comment>
<comment type="cofactor">
    <cofactor evidence="6">
        <name>Mg(2+)</name>
        <dbReference type="ChEBI" id="CHEBI:18420"/>
    </cofactor>
    <cofactor evidence="7">
        <name>Mn(2+)</name>
        <dbReference type="ChEBI" id="CHEBI:29035"/>
    </cofactor>
    <text evidence="7">Divalent metal cations, possibly Mg(2+) or Mn(2+).</text>
</comment>
<comment type="subunit">
    <text evidence="1">Interacts with the capsid protein; this interaction relocates Rep into the nucleus.</text>
</comment>
<comment type="subcellular location">
    <subcellularLocation>
        <location evidence="8">Host nucleus</location>
    </subcellularLocation>
</comment>
<comment type="alternative products">
    <event type="alternative splicing"/>
    <isoform>
        <id>Q805H4-1</id>
        <name>Rep</name>
        <sequence type="displayed"/>
    </isoform>
    <isoform>
        <id>Q805H4-2</id>
        <name>Rep'</name>
        <sequence type="described" ref="VSP_015880 VSP_015881"/>
    </isoform>
    <isoform>
        <id>Q805H4-3</id>
        <name>Rep3a</name>
        <sequence type="described" ref="VSP_015877"/>
    </isoform>
    <isoform>
        <id>Q805H4-4</id>
        <name>Rep3b</name>
        <sequence type="described" ref="VSP_015878"/>
    </isoform>
    <isoform>
        <id>Q805H4-5</id>
        <name>Rep3c-4a</name>
        <sequence type="described" ref="VSP_015879"/>
    </isoform>
</comment>
<comment type="domain">
    <text>There are 3 rolling circle replication (RCR) motifs. RCR-2 is probably involved in metal coordination. RCR-3 is required for phosphodiester bond cleavage for initiation of RCR.</text>
</comment>
<comment type="similarity">
    <text evidence="8">Belongs to the nanoviruses/circoviruses replication-associated protein family.</text>
</comment>
<accession>Q805H4</accession>
<accession>O90238</accession>
<accession>Q6DMP3</accession>
<accession>Q80QL6</accession>
<accession>Q80QL7</accession>
<accession>Q80QL8</accession>
<accession>Q80QL9</accession>
<organismHost>
    <name type="scientific">Sus scrofa</name>
    <name type="common">Pig</name>
    <dbReference type="NCBI Taxonomy" id="9823"/>
</organismHost>
<keyword id="KW-0025">Alternative splicing</keyword>
<keyword id="KW-0067">ATP-binding</keyword>
<keyword id="KW-0190">Covalent protein-DNA linkage</keyword>
<keyword id="KW-0235">DNA replication</keyword>
<keyword id="KW-0238">DNA-binding</keyword>
<keyword id="KW-0255">Endonuclease</keyword>
<keyword id="KW-0347">Helicase</keyword>
<keyword id="KW-1048">Host nucleus</keyword>
<keyword id="KW-0378">Hydrolase</keyword>
<keyword id="KW-0479">Metal-binding</keyword>
<keyword id="KW-0511">Multifunctional enzyme</keyword>
<keyword id="KW-0540">Nuclease</keyword>
<keyword id="KW-0547">Nucleotide-binding</keyword>
<keyword id="KW-0548">Nucleotidyltransferase</keyword>
<keyword id="KW-1185">Reference proteome</keyword>
<keyword id="KW-0808">Transferase</keyword>
<sequence length="312" mass="35635">MPSKKSGPQPHKRWVFTLNNPSEEEKNKIRELPISLFDYFVCGEEGLEEGRTPHLQGFANFAKKQTFNKVKWYFGARCHIEKAKGTDQQNKEYCSKEGHILIECGAPRNQGKRSDLSTAVSTLLETGSLVTVAEQFPVTYVRNFRGLAELLKVSGKMQQRDWKTAVHVIVGPPGCGKSQWARNFAEPSDTYWKPSRNKWWDGYHGEEVVVLDDFYGWLPWDDLLRLCDRYPLTVETKGGTVPFLARSILITSNQAPQEWYSSTAVPAVEALYRRITTLQFWKTAGEQSTEVPEGRFEAVDPPCALFPYKINY</sequence>
<protein>
    <recommendedName>
        <fullName>Replication-associated protein</fullName>
        <shortName>Rep</shortName>
        <ecNumber>2.7.7.-</ecNumber>
        <ecNumber>3.1.21.-</ecNumber>
        <ecNumber>3.6.1.-</ecNumber>
    </recommendedName>
    <alternativeName>
        <fullName>ATP-dependent helicase Rep</fullName>
    </alternativeName>
    <alternativeName>
        <fullName>RepP</fullName>
    </alternativeName>
</protein>
<reference key="1">
    <citation type="journal article" date="1998" name="Arch. Virol.">
        <title>Beak and feather disease virus and porcine circovirus genomes: intermediates between the geminiviruses and plant circoviruses.</title>
        <authorList>
            <person name="Niagro F.D."/>
            <person name="Forsthoefel A.N."/>
            <person name="Lawther R.P."/>
            <person name="Kamalanathan L."/>
            <person name="Ritchie B.W."/>
            <person name="Latimer K.S."/>
            <person name="Lukert P.D."/>
        </authorList>
    </citation>
    <scope>NUCLEOTIDE SEQUENCE [GENOMIC DNA]</scope>
    <source>
        <strain>Isolate ATCC CCL-33/PK15</strain>
    </source>
</reference>
<reference key="2">
    <citation type="journal article" date="2003" name="Virology">
        <title>Comparative analysis of the transcriptional patterns of pathogenic and nonpathogenic porcine circoviruses.</title>
        <authorList>
            <person name="Cheung A.K."/>
        </authorList>
    </citation>
    <scope>NUCLEOTIDE SEQUENCE [GENOMIC DNA] (ISOFORMS REP; REP'; REP3A; REP3B AND REP3C-4A)</scope>
    <source>
        <strain>Isolate ATCC CCL-33/PK15</strain>
    </source>
</reference>
<reference key="3">
    <citation type="submission" date="2004-06" db="EMBL/GenBank/DDBJ databases">
        <title>Genomic sequence of Porcine circovirus type 1 isolated from IBRS-2 cell line.</title>
        <authorList>
            <person name="Cao S."/>
            <person name="Chen H."/>
            <person name="Ju C."/>
        </authorList>
    </citation>
    <scope>NUCLEOTIDE SEQUENCE [GENOMIC DNA]</scope>
    <source>
        <strain>Isolate IBRS-2</strain>
    </source>
</reference>
<reference key="4">
    <citation type="journal article" date="2004" name="J. Virol.">
        <title>Detection of template strand switching during initiation and termination of DNA replication of porcine circovirus.</title>
        <authorList>
            <person name="Cheung A.K."/>
        </authorList>
    </citation>
    <scope>MODEL OF REPLICATION</scope>
</reference>
<reference key="5">
    <citation type="journal article" date="2004" name="J. Virol.">
        <title>Palindrome regeneration by template strand-switching mechanism at the origin of DNA replication of porcine circovirus via the rolling-circle melting-pot replication model.</title>
        <authorList>
            <person name="Cheung A.K."/>
        </authorList>
    </citation>
    <scope>MODEL OF REPLICATION</scope>
</reference>
<reference key="6">
    <citation type="journal article" date="2005" name="Virology">
        <title>Detection of rampant nucleotide reversion at the origin of DNA replication of porcine circovirus type 1.</title>
        <authorList>
            <person name="Cheung A.K."/>
        </authorList>
    </citation>
    <scope>MODEL OF REPLICATION</scope>
</reference>
<reference key="7">
    <citation type="journal article" date="2006" name="J. Virol.">
        <title>Demonstration of nicking/joining activity at the origin of DNA replication associated with the rep and rep' proteins of porcine circovirus type 1.</title>
        <authorList>
            <person name="Steinfeldt T."/>
            <person name="Finsterbusch T."/>
            <person name="Mankertz A."/>
        </authorList>
    </citation>
    <scope>FUNCTION</scope>
</reference>
<name>REP_PCV1</name>
<proteinExistence type="inferred from homology"/>
<organism>
    <name type="scientific">Porcine circovirus 1</name>
    <name type="common">PCV1</name>
    <dbReference type="NCBI Taxonomy" id="133704"/>
    <lineage>
        <taxon>Viruses</taxon>
        <taxon>Monodnaviria</taxon>
        <taxon>Shotokuvirae</taxon>
        <taxon>Cressdnaviricota</taxon>
        <taxon>Arfiviricetes</taxon>
        <taxon>Cirlivirales</taxon>
        <taxon>Circoviridae</taxon>
        <taxon>Circovirus</taxon>
        <taxon>Circovirus porcine1</taxon>
    </lineage>
</organism>